<sequence length="416" mass="45644">MSLVAIGINHKTATVDLREKVAFAPDKIHEAMKSLASRTKTGEAVIVSTCNRTELYCNTGDEADVISWLESYHQLSHDDVLPCLYKYQGQQVVQHLMRVSSGLDSLILGEPQILGQVKQSFVKAKEAGTVAVTMDRLFQNTFSVAKKVRTETEIGAAAVSVAFAAVSMAKHIFSALSATKVLLIGAGETIELVARHLKDNGVDSMIVANRTISRAEAMCEEFGATAITLEQIPDFLPKADIVISSTASPLPILGKGMVEKALKQRRHQPMLLVDIAVPRDIEAEVADLDDAFLYTVDDLQSIIEQNMASRREAAEKAELIVEEESHHFMEWIRSLESVDSIREYRSQSMAIRDELVERAINKLAQGGDSEQLILELANKLTNKLIHAPTQALTQASRRGDLNSLGQLRAALGLDKD</sequence>
<name>HEM1_SHELP</name>
<protein>
    <recommendedName>
        <fullName evidence="1">Glutamyl-tRNA reductase</fullName>
        <shortName evidence="1">GluTR</shortName>
        <ecNumber evidence="1">1.2.1.70</ecNumber>
    </recommendedName>
</protein>
<comment type="function">
    <text evidence="1">Catalyzes the NADPH-dependent reduction of glutamyl-tRNA(Glu) to glutamate 1-semialdehyde (GSA).</text>
</comment>
<comment type="catalytic activity">
    <reaction evidence="1">
        <text>(S)-4-amino-5-oxopentanoate + tRNA(Glu) + NADP(+) = L-glutamyl-tRNA(Glu) + NADPH + H(+)</text>
        <dbReference type="Rhea" id="RHEA:12344"/>
        <dbReference type="Rhea" id="RHEA-COMP:9663"/>
        <dbReference type="Rhea" id="RHEA-COMP:9680"/>
        <dbReference type="ChEBI" id="CHEBI:15378"/>
        <dbReference type="ChEBI" id="CHEBI:57501"/>
        <dbReference type="ChEBI" id="CHEBI:57783"/>
        <dbReference type="ChEBI" id="CHEBI:58349"/>
        <dbReference type="ChEBI" id="CHEBI:78442"/>
        <dbReference type="ChEBI" id="CHEBI:78520"/>
        <dbReference type="EC" id="1.2.1.70"/>
    </reaction>
</comment>
<comment type="pathway">
    <text evidence="1">Porphyrin-containing compound metabolism; protoporphyrin-IX biosynthesis; 5-aminolevulinate from L-glutamyl-tRNA(Glu): step 1/2.</text>
</comment>
<comment type="subunit">
    <text evidence="1">Homodimer.</text>
</comment>
<comment type="domain">
    <text evidence="1">Possesses an unusual extended V-shaped dimeric structure with each monomer consisting of three distinct domains arranged along a curved 'spinal' alpha-helix. The N-terminal catalytic domain specifically recognizes the glutamate moiety of the substrate. The second domain is the NADPH-binding domain, and the third C-terminal domain is responsible for dimerization.</text>
</comment>
<comment type="miscellaneous">
    <text evidence="1">During catalysis, the active site Cys acts as a nucleophile attacking the alpha-carbonyl group of tRNA-bound glutamate with the formation of a thioester intermediate between enzyme and glutamate, and the concomitant release of tRNA(Glu). The thioester intermediate is finally reduced by direct hydride transfer from NADPH, to form the product GSA.</text>
</comment>
<comment type="similarity">
    <text evidence="1">Belongs to the glutamyl-tRNA reductase family.</text>
</comment>
<feature type="chain" id="PRO_1000004690" description="Glutamyl-tRNA reductase">
    <location>
        <begin position="1"/>
        <end position="416"/>
    </location>
</feature>
<feature type="active site" description="Nucleophile" evidence="1">
    <location>
        <position position="50"/>
    </location>
</feature>
<feature type="binding site" evidence="1">
    <location>
        <begin position="49"/>
        <end position="52"/>
    </location>
    <ligand>
        <name>substrate</name>
    </ligand>
</feature>
<feature type="binding site" evidence="1">
    <location>
        <position position="105"/>
    </location>
    <ligand>
        <name>substrate</name>
    </ligand>
</feature>
<feature type="binding site" evidence="1">
    <location>
        <begin position="110"/>
        <end position="112"/>
    </location>
    <ligand>
        <name>substrate</name>
    </ligand>
</feature>
<feature type="binding site" evidence="1">
    <location>
        <position position="116"/>
    </location>
    <ligand>
        <name>substrate</name>
    </ligand>
</feature>
<feature type="binding site" evidence="1">
    <location>
        <begin position="185"/>
        <end position="190"/>
    </location>
    <ligand>
        <name>NADP(+)</name>
        <dbReference type="ChEBI" id="CHEBI:58349"/>
    </ligand>
</feature>
<feature type="site" description="Important for activity" evidence="1">
    <location>
        <position position="95"/>
    </location>
</feature>
<gene>
    <name evidence="1" type="primary">hemA</name>
    <name type="ordered locus">Shew_2913</name>
</gene>
<keyword id="KW-0521">NADP</keyword>
<keyword id="KW-0560">Oxidoreductase</keyword>
<keyword id="KW-0627">Porphyrin biosynthesis</keyword>
<keyword id="KW-1185">Reference proteome</keyword>
<evidence type="ECO:0000255" key="1">
    <source>
        <dbReference type="HAMAP-Rule" id="MF_00087"/>
    </source>
</evidence>
<proteinExistence type="inferred from homology"/>
<organism>
    <name type="scientific">Shewanella loihica (strain ATCC BAA-1088 / PV-4)</name>
    <dbReference type="NCBI Taxonomy" id="323850"/>
    <lineage>
        <taxon>Bacteria</taxon>
        <taxon>Pseudomonadati</taxon>
        <taxon>Pseudomonadota</taxon>
        <taxon>Gammaproteobacteria</taxon>
        <taxon>Alteromonadales</taxon>
        <taxon>Shewanellaceae</taxon>
        <taxon>Shewanella</taxon>
    </lineage>
</organism>
<dbReference type="EC" id="1.2.1.70" evidence="1"/>
<dbReference type="EMBL" id="CP000606">
    <property type="protein sequence ID" value="ABO24779.1"/>
    <property type="molecule type" value="Genomic_DNA"/>
</dbReference>
<dbReference type="RefSeq" id="WP_011866710.1">
    <property type="nucleotide sequence ID" value="NC_009092.1"/>
</dbReference>
<dbReference type="SMR" id="A3QH31"/>
<dbReference type="STRING" id="323850.Shew_2913"/>
<dbReference type="KEGG" id="slo:Shew_2913"/>
<dbReference type="eggNOG" id="COG0373">
    <property type="taxonomic scope" value="Bacteria"/>
</dbReference>
<dbReference type="HOGENOM" id="CLU_035113_2_2_6"/>
<dbReference type="OrthoDB" id="110209at2"/>
<dbReference type="UniPathway" id="UPA00251">
    <property type="reaction ID" value="UER00316"/>
</dbReference>
<dbReference type="Proteomes" id="UP000001558">
    <property type="component" value="Chromosome"/>
</dbReference>
<dbReference type="GO" id="GO:0008883">
    <property type="term" value="F:glutamyl-tRNA reductase activity"/>
    <property type="evidence" value="ECO:0007669"/>
    <property type="project" value="UniProtKB-UniRule"/>
</dbReference>
<dbReference type="GO" id="GO:0050661">
    <property type="term" value="F:NADP binding"/>
    <property type="evidence" value="ECO:0007669"/>
    <property type="project" value="InterPro"/>
</dbReference>
<dbReference type="GO" id="GO:0019353">
    <property type="term" value="P:protoporphyrinogen IX biosynthetic process from glutamate"/>
    <property type="evidence" value="ECO:0007669"/>
    <property type="project" value="TreeGrafter"/>
</dbReference>
<dbReference type="CDD" id="cd05213">
    <property type="entry name" value="NAD_bind_Glutamyl_tRNA_reduct"/>
    <property type="match status" value="1"/>
</dbReference>
<dbReference type="FunFam" id="3.30.460.30:FF:000001">
    <property type="entry name" value="Glutamyl-tRNA reductase"/>
    <property type="match status" value="1"/>
</dbReference>
<dbReference type="FunFam" id="3.40.50.720:FF:000031">
    <property type="entry name" value="Glutamyl-tRNA reductase"/>
    <property type="match status" value="1"/>
</dbReference>
<dbReference type="Gene3D" id="3.30.460.30">
    <property type="entry name" value="Glutamyl-tRNA reductase, N-terminal domain"/>
    <property type="match status" value="1"/>
</dbReference>
<dbReference type="Gene3D" id="3.40.50.720">
    <property type="entry name" value="NAD(P)-binding Rossmann-like Domain"/>
    <property type="match status" value="1"/>
</dbReference>
<dbReference type="HAMAP" id="MF_00087">
    <property type="entry name" value="Glu_tRNA_reductase"/>
    <property type="match status" value="1"/>
</dbReference>
<dbReference type="InterPro" id="IPR000343">
    <property type="entry name" value="4pyrrol_synth_GluRdtase"/>
</dbReference>
<dbReference type="InterPro" id="IPR015896">
    <property type="entry name" value="4pyrrol_synth_GluRdtase_dimer"/>
</dbReference>
<dbReference type="InterPro" id="IPR015895">
    <property type="entry name" value="4pyrrol_synth_GluRdtase_N"/>
</dbReference>
<dbReference type="InterPro" id="IPR018214">
    <property type="entry name" value="GluRdtase_CS"/>
</dbReference>
<dbReference type="InterPro" id="IPR036453">
    <property type="entry name" value="GluRdtase_dimer_dom_sf"/>
</dbReference>
<dbReference type="InterPro" id="IPR036343">
    <property type="entry name" value="GluRdtase_N_sf"/>
</dbReference>
<dbReference type="InterPro" id="IPR036291">
    <property type="entry name" value="NAD(P)-bd_dom_sf"/>
</dbReference>
<dbReference type="InterPro" id="IPR006151">
    <property type="entry name" value="Shikm_DH/Glu-tRNA_Rdtase"/>
</dbReference>
<dbReference type="NCBIfam" id="TIGR01035">
    <property type="entry name" value="hemA"/>
    <property type="match status" value="1"/>
</dbReference>
<dbReference type="PANTHER" id="PTHR43013">
    <property type="entry name" value="GLUTAMYL-TRNA REDUCTASE"/>
    <property type="match status" value="1"/>
</dbReference>
<dbReference type="PANTHER" id="PTHR43013:SF1">
    <property type="entry name" value="GLUTAMYL-TRNA REDUCTASE"/>
    <property type="match status" value="1"/>
</dbReference>
<dbReference type="Pfam" id="PF00745">
    <property type="entry name" value="GlutR_dimer"/>
    <property type="match status" value="1"/>
</dbReference>
<dbReference type="Pfam" id="PF05201">
    <property type="entry name" value="GlutR_N"/>
    <property type="match status" value="1"/>
</dbReference>
<dbReference type="Pfam" id="PF01488">
    <property type="entry name" value="Shikimate_DH"/>
    <property type="match status" value="1"/>
</dbReference>
<dbReference type="PIRSF" id="PIRSF000445">
    <property type="entry name" value="4pyrrol_synth_GluRdtase"/>
    <property type="match status" value="1"/>
</dbReference>
<dbReference type="SUPFAM" id="SSF69742">
    <property type="entry name" value="Glutamyl tRNA-reductase catalytic, N-terminal domain"/>
    <property type="match status" value="1"/>
</dbReference>
<dbReference type="SUPFAM" id="SSF69075">
    <property type="entry name" value="Glutamyl tRNA-reductase dimerization domain"/>
    <property type="match status" value="1"/>
</dbReference>
<dbReference type="SUPFAM" id="SSF51735">
    <property type="entry name" value="NAD(P)-binding Rossmann-fold domains"/>
    <property type="match status" value="1"/>
</dbReference>
<dbReference type="PROSITE" id="PS00747">
    <property type="entry name" value="GLUTR"/>
    <property type="match status" value="1"/>
</dbReference>
<accession>A3QH31</accession>
<reference key="1">
    <citation type="submission" date="2007-03" db="EMBL/GenBank/DDBJ databases">
        <title>Complete sequence of Shewanella loihica PV-4.</title>
        <authorList>
            <consortium name="US DOE Joint Genome Institute"/>
            <person name="Copeland A."/>
            <person name="Lucas S."/>
            <person name="Lapidus A."/>
            <person name="Barry K."/>
            <person name="Detter J.C."/>
            <person name="Glavina del Rio T."/>
            <person name="Hammon N."/>
            <person name="Israni S."/>
            <person name="Dalin E."/>
            <person name="Tice H."/>
            <person name="Pitluck S."/>
            <person name="Chain P."/>
            <person name="Malfatti S."/>
            <person name="Shin M."/>
            <person name="Vergez L."/>
            <person name="Schmutz J."/>
            <person name="Larimer F."/>
            <person name="Land M."/>
            <person name="Hauser L."/>
            <person name="Kyrpides N."/>
            <person name="Mikhailova N."/>
            <person name="Romine M.F."/>
            <person name="Serres G."/>
            <person name="Fredrickson J."/>
            <person name="Tiedje J."/>
            <person name="Richardson P."/>
        </authorList>
    </citation>
    <scope>NUCLEOTIDE SEQUENCE [LARGE SCALE GENOMIC DNA]</scope>
    <source>
        <strain>ATCC BAA-1088 / PV-4</strain>
    </source>
</reference>